<comment type="function">
    <text>Is involved in NO detoxification in an aerobic process, termed nitric oxide dioxygenase (NOD) reaction that utilizes O(2) and NAD(P)H to convert NO to nitrate, which protects the fungus from various noxious nitrogen compounds. Therefore, plays a central role in the inducible response to nitrosative stress.</text>
</comment>
<comment type="function">
    <text>In the presence of oxygen and NADH, it has NADH oxidase activity, which leads to the generation of superoxide and H(2)O(2). Under anaerobic conditions, it also exhibits nitric oxide reductase and FAD reductase activities. However, all these reactions are much lower than NOD activity.</text>
</comment>
<comment type="catalytic activity">
    <reaction evidence="4">
        <text>2 nitric oxide + NADPH + 2 O2 = 2 nitrate + NADP(+) + H(+)</text>
        <dbReference type="Rhea" id="RHEA:19465"/>
        <dbReference type="ChEBI" id="CHEBI:15378"/>
        <dbReference type="ChEBI" id="CHEBI:15379"/>
        <dbReference type="ChEBI" id="CHEBI:16480"/>
        <dbReference type="ChEBI" id="CHEBI:17632"/>
        <dbReference type="ChEBI" id="CHEBI:57783"/>
        <dbReference type="ChEBI" id="CHEBI:58349"/>
        <dbReference type="EC" id="1.14.12.17"/>
    </reaction>
</comment>
<comment type="catalytic activity">
    <reaction evidence="4">
        <text>2 nitric oxide + NADH + 2 O2 = 2 nitrate + NAD(+) + H(+)</text>
        <dbReference type="Rhea" id="RHEA:19469"/>
        <dbReference type="ChEBI" id="CHEBI:15378"/>
        <dbReference type="ChEBI" id="CHEBI:15379"/>
        <dbReference type="ChEBI" id="CHEBI:16480"/>
        <dbReference type="ChEBI" id="CHEBI:17632"/>
        <dbReference type="ChEBI" id="CHEBI:57540"/>
        <dbReference type="ChEBI" id="CHEBI:57945"/>
        <dbReference type="EC" id="1.14.12.17"/>
    </reaction>
</comment>
<comment type="cofactor">
    <cofactor>
        <name>FAD</name>
        <dbReference type="ChEBI" id="CHEBI:57692"/>
    </cofactor>
    <text>Binds 1 FAD per subunit.</text>
</comment>
<comment type="cofactor">
    <cofactor>
        <name>heme b</name>
        <dbReference type="ChEBI" id="CHEBI:60344"/>
    </cofactor>
    <text>Binds 1 heme b group per subunit.</text>
</comment>
<comment type="interaction">
    <interactant intactId="EBI-6905">
        <id>P39676</id>
    </interactant>
    <interactant intactId="EBI-2206814">
        <id>Q07540</id>
        <label>YFH1</label>
    </interactant>
    <organismsDiffer>false</organismsDiffer>
    <experiments>2</experiments>
</comment>
<comment type="subcellular location">
    <subcellularLocation>
        <location evidence="1">Cytoplasm</location>
    </subcellularLocation>
</comment>
<comment type="domain">
    <text>Consists of two distinct domains; a N-terminal heme-containing oxygen-binding domain and a C-terminal reductase domain with binding sites for FAD and NAD(P)H.</text>
</comment>
<comment type="miscellaneous">
    <text evidence="5">Present with 13000 molecules/cell in log phase SD medium.</text>
</comment>
<comment type="similarity">
    <text evidence="2">Belongs to the globin family. Two-domain flavohemoproteins subfamily.</text>
</comment>
<comment type="similarity">
    <text evidence="7">In the C-terminal section; belongs to the flavoprotein pyridine nucleotide cytochrome reductase family.</text>
</comment>
<gene>
    <name type="primary">YHB1</name>
    <name type="synonym">YHB</name>
    <name type="ordered locus">YGR234W</name>
    <name type="ORF">G8572</name>
</gene>
<evidence type="ECO:0000250" key="1"/>
<evidence type="ECO:0000255" key="2">
    <source>
        <dbReference type="PROSITE-ProRule" id="PRU00238"/>
    </source>
</evidence>
<evidence type="ECO:0000255" key="3">
    <source>
        <dbReference type="PROSITE-ProRule" id="PRU00716"/>
    </source>
</evidence>
<evidence type="ECO:0000269" key="4">
    <source>
    </source>
</evidence>
<evidence type="ECO:0000269" key="5">
    <source>
    </source>
</evidence>
<evidence type="ECO:0000269" key="6">
    <source>
    </source>
</evidence>
<evidence type="ECO:0000305" key="7"/>
<evidence type="ECO:0007744" key="8">
    <source>
    </source>
</evidence>
<name>FHP_YEAST</name>
<protein>
    <recommendedName>
        <fullName>Flavohemoprotein</fullName>
        <ecNumber>1.14.12.17</ecNumber>
    </recommendedName>
    <alternativeName>
        <fullName>Flavohemoglobin</fullName>
    </alternativeName>
    <alternativeName>
        <fullName>Hemoglobin-like protein</fullName>
    </alternativeName>
    <alternativeName>
        <fullName>Nitric oxide dioxygenase</fullName>
        <shortName>NO oxygenase</shortName>
        <shortName>NOD</shortName>
    </alternativeName>
</protein>
<sequence length="399" mass="44646">MLAEKTRSIIKATVPVLEQQGTVITRTFYKNMLTEHTELLNIFNRTNQKVGAQPNALATTVLAAAKNIDDLSVLMDHVKQIGHKHRALQIKPEHYPIVGEYLLKAIKEVLGDAATPEIINAWGEAYQAIADIFITVEKKMYEEALWPGWKPFDITAKEYVASDIVEFTVKPKFGSGIELESLPITPGQYITVNTHPIRQENQYDALRHYSLCSASTKNGLRFAVKMEAARENFPAGLVSEYLHKDAKVGDEIKLSAPAGDFAINKELIHQNEVPLVLLSSGVGVTPLLAMLEEQVKCNPNRPIYWIQSSYDEKTQAFKKHVDELLAECANVDKIIVHTDTEPLINAAFLKEKSPAHADVYTCGSLAFMQAMIGHLKELEHRDDMIHYEPFGPKMSTVQV</sequence>
<proteinExistence type="evidence at protein level"/>
<organism>
    <name type="scientific">Saccharomyces cerevisiae (strain ATCC 204508 / S288c)</name>
    <name type="common">Baker's yeast</name>
    <dbReference type="NCBI Taxonomy" id="559292"/>
    <lineage>
        <taxon>Eukaryota</taxon>
        <taxon>Fungi</taxon>
        <taxon>Dikarya</taxon>
        <taxon>Ascomycota</taxon>
        <taxon>Saccharomycotina</taxon>
        <taxon>Saccharomycetes</taxon>
        <taxon>Saccharomycetales</taxon>
        <taxon>Saccharomycetaceae</taxon>
        <taxon>Saccharomyces</taxon>
    </lineage>
</organism>
<dbReference type="EC" id="1.14.12.17"/>
<dbReference type="EMBL" id="L07070">
    <property type="status" value="NOT_ANNOTATED_CDS"/>
    <property type="molecule type" value="mRNA"/>
</dbReference>
<dbReference type="EMBL" id="L07071">
    <property type="status" value="NOT_ANNOTATED_CDS"/>
    <property type="molecule type" value="Genomic_DNA"/>
</dbReference>
<dbReference type="EMBL" id="X87941">
    <property type="protein sequence ID" value="CAA61184.1"/>
    <property type="molecule type" value="Genomic_DNA"/>
</dbReference>
<dbReference type="EMBL" id="Z73019">
    <property type="protein sequence ID" value="CAA97262.1"/>
    <property type="molecule type" value="Genomic_DNA"/>
</dbReference>
<dbReference type="EMBL" id="AY692964">
    <property type="protein sequence ID" value="AAT92983.1"/>
    <property type="molecule type" value="Genomic_DNA"/>
</dbReference>
<dbReference type="EMBL" id="AF239759">
    <property type="protein sequence ID" value="AAK15081.1"/>
    <property type="molecule type" value="Genomic_DNA"/>
</dbReference>
<dbReference type="EMBL" id="BK006941">
    <property type="protein sequence ID" value="DAA08325.1"/>
    <property type="molecule type" value="Genomic_DNA"/>
</dbReference>
<dbReference type="PIR" id="S57699">
    <property type="entry name" value="S57699"/>
</dbReference>
<dbReference type="RefSeq" id="NP_011750.1">
    <property type="nucleotide sequence ID" value="NM_001181363.1"/>
</dbReference>
<dbReference type="SMR" id="P39676"/>
<dbReference type="BioGRID" id="33486">
    <property type="interactions" value="153"/>
</dbReference>
<dbReference type="DIP" id="DIP-1355N"/>
<dbReference type="FunCoup" id="P39676">
    <property type="interactions" value="489"/>
</dbReference>
<dbReference type="IntAct" id="P39676">
    <property type="interactions" value="48"/>
</dbReference>
<dbReference type="MINT" id="P39676"/>
<dbReference type="STRING" id="4932.YGR234W"/>
<dbReference type="GlyGen" id="P39676">
    <property type="glycosylation" value="1 site"/>
</dbReference>
<dbReference type="iPTMnet" id="P39676"/>
<dbReference type="PaxDb" id="4932-YGR234W"/>
<dbReference type="PeptideAtlas" id="P39676"/>
<dbReference type="TopDownProteomics" id="P39676"/>
<dbReference type="EnsemblFungi" id="YGR234W_mRNA">
    <property type="protein sequence ID" value="YGR234W"/>
    <property type="gene ID" value="YGR234W"/>
</dbReference>
<dbReference type="GeneID" id="853149"/>
<dbReference type="KEGG" id="sce:YGR234W"/>
<dbReference type="AGR" id="SGD:S000003466"/>
<dbReference type="SGD" id="S000003466">
    <property type="gene designation" value="YHB1"/>
</dbReference>
<dbReference type="VEuPathDB" id="FungiDB:YGR234W"/>
<dbReference type="eggNOG" id="KOG3378">
    <property type="taxonomic scope" value="Eukaryota"/>
</dbReference>
<dbReference type="HOGENOM" id="CLU_003827_12_0_1"/>
<dbReference type="InParanoid" id="P39676"/>
<dbReference type="OMA" id="ADIHYEV"/>
<dbReference type="OrthoDB" id="436496at2759"/>
<dbReference type="BioCyc" id="YEAST:G3O-30912-MONOMER"/>
<dbReference type="SABIO-RK" id="P39676"/>
<dbReference type="BioGRID-ORCS" id="853149">
    <property type="hits" value="1 hit in 10 CRISPR screens"/>
</dbReference>
<dbReference type="CD-CODE" id="E03F929F">
    <property type="entry name" value="Stress granule"/>
</dbReference>
<dbReference type="PRO" id="PR:P39676"/>
<dbReference type="Proteomes" id="UP000002311">
    <property type="component" value="Chromosome VII"/>
</dbReference>
<dbReference type="RNAct" id="P39676">
    <property type="molecule type" value="protein"/>
</dbReference>
<dbReference type="GO" id="GO:0005737">
    <property type="term" value="C:cytoplasm"/>
    <property type="evidence" value="ECO:0007005"/>
    <property type="project" value="SGD"/>
</dbReference>
<dbReference type="GO" id="GO:0010494">
    <property type="term" value="C:cytoplasmic stress granule"/>
    <property type="evidence" value="ECO:0007005"/>
    <property type="project" value="SGD"/>
</dbReference>
<dbReference type="GO" id="GO:0005829">
    <property type="term" value="C:cytosol"/>
    <property type="evidence" value="ECO:0000314"/>
    <property type="project" value="SGD"/>
</dbReference>
<dbReference type="GO" id="GO:0005759">
    <property type="term" value="C:mitochondrial matrix"/>
    <property type="evidence" value="ECO:0000314"/>
    <property type="project" value="SGD"/>
</dbReference>
<dbReference type="GO" id="GO:0005739">
    <property type="term" value="C:mitochondrion"/>
    <property type="evidence" value="ECO:0007005"/>
    <property type="project" value="SGD"/>
</dbReference>
<dbReference type="GO" id="GO:0005634">
    <property type="term" value="C:nucleus"/>
    <property type="evidence" value="ECO:0007005"/>
    <property type="project" value="SGD"/>
</dbReference>
<dbReference type="GO" id="GO:0071949">
    <property type="term" value="F:FAD binding"/>
    <property type="evidence" value="ECO:0000318"/>
    <property type="project" value="GO_Central"/>
</dbReference>
<dbReference type="GO" id="GO:0020037">
    <property type="term" value="F:heme binding"/>
    <property type="evidence" value="ECO:0007669"/>
    <property type="project" value="InterPro"/>
</dbReference>
<dbReference type="GO" id="GO:0046872">
    <property type="term" value="F:metal ion binding"/>
    <property type="evidence" value="ECO:0007669"/>
    <property type="project" value="UniProtKB-KW"/>
</dbReference>
<dbReference type="GO" id="GO:0008941">
    <property type="term" value="F:nitric oxide dioxygenase NAD(P)H activity"/>
    <property type="evidence" value="ECO:0000318"/>
    <property type="project" value="GO_Central"/>
</dbReference>
<dbReference type="GO" id="GO:0016966">
    <property type="term" value="F:nitric oxide reductase activity"/>
    <property type="evidence" value="ECO:0000315"/>
    <property type="project" value="SGD"/>
</dbReference>
<dbReference type="GO" id="GO:0019825">
    <property type="term" value="F:oxygen binding"/>
    <property type="evidence" value="ECO:0007669"/>
    <property type="project" value="InterPro"/>
</dbReference>
<dbReference type="GO" id="GO:0071218">
    <property type="term" value="P:cellular response to misfolded protein"/>
    <property type="evidence" value="ECO:0000315"/>
    <property type="project" value="SGD"/>
</dbReference>
<dbReference type="GO" id="GO:0071500">
    <property type="term" value="P:cellular response to nitrosative stress"/>
    <property type="evidence" value="ECO:0000318"/>
    <property type="project" value="GO_Central"/>
</dbReference>
<dbReference type="GO" id="GO:0034599">
    <property type="term" value="P:cellular response to oxidative stress"/>
    <property type="evidence" value="ECO:0000314"/>
    <property type="project" value="SGD"/>
</dbReference>
<dbReference type="GO" id="GO:1902170">
    <property type="term" value="P:cellular response to reactive nitrogen species"/>
    <property type="evidence" value="ECO:0000315"/>
    <property type="project" value="SGD"/>
</dbReference>
<dbReference type="GO" id="GO:0046210">
    <property type="term" value="P:nitric oxide catabolic process"/>
    <property type="evidence" value="ECO:0000318"/>
    <property type="project" value="GO_Central"/>
</dbReference>
<dbReference type="GO" id="GO:0009636">
    <property type="term" value="P:response to toxic substance"/>
    <property type="evidence" value="ECO:0007669"/>
    <property type="project" value="UniProtKB-KW"/>
</dbReference>
<dbReference type="CDD" id="cd06184">
    <property type="entry name" value="flavohem_like_fad_nad_binding"/>
    <property type="match status" value="1"/>
</dbReference>
<dbReference type="CDD" id="cd14777">
    <property type="entry name" value="Yhb1-globin-like"/>
    <property type="match status" value="1"/>
</dbReference>
<dbReference type="FunFam" id="1.10.490.10:FF:000003">
    <property type="entry name" value="Flavohemoprotein"/>
    <property type="match status" value="1"/>
</dbReference>
<dbReference type="FunFam" id="2.40.30.10:FF:000034">
    <property type="entry name" value="Flavohemoprotein"/>
    <property type="match status" value="1"/>
</dbReference>
<dbReference type="FunFam" id="3.40.50.80:FF:000010">
    <property type="entry name" value="Flavohemoprotein"/>
    <property type="match status" value="1"/>
</dbReference>
<dbReference type="Gene3D" id="1.10.490.10">
    <property type="entry name" value="Globins"/>
    <property type="match status" value="1"/>
</dbReference>
<dbReference type="Gene3D" id="3.40.50.80">
    <property type="entry name" value="Nucleotide-binding domain of ferredoxin-NADP reductase (FNR) module"/>
    <property type="match status" value="1"/>
</dbReference>
<dbReference type="Gene3D" id="2.40.30.10">
    <property type="entry name" value="Translation factors"/>
    <property type="match status" value="1"/>
</dbReference>
<dbReference type="InterPro" id="IPR008333">
    <property type="entry name" value="Cbr1-like_FAD-bd_dom"/>
</dbReference>
<dbReference type="InterPro" id="IPR017927">
    <property type="entry name" value="FAD-bd_FR_type"/>
</dbReference>
<dbReference type="InterPro" id="IPR039261">
    <property type="entry name" value="FNR_nucleotide-bd"/>
</dbReference>
<dbReference type="InterPro" id="IPR000971">
    <property type="entry name" value="Globin"/>
</dbReference>
<dbReference type="InterPro" id="IPR009050">
    <property type="entry name" value="Globin-like_sf"/>
</dbReference>
<dbReference type="InterPro" id="IPR012292">
    <property type="entry name" value="Globin/Proto"/>
</dbReference>
<dbReference type="InterPro" id="IPR001433">
    <property type="entry name" value="OxRdtase_FAD/NAD-bd"/>
</dbReference>
<dbReference type="InterPro" id="IPR017938">
    <property type="entry name" value="Riboflavin_synthase-like_b-brl"/>
</dbReference>
<dbReference type="PANTHER" id="PTHR43396">
    <property type="entry name" value="FLAVOHEMOPROTEIN"/>
    <property type="match status" value="1"/>
</dbReference>
<dbReference type="PANTHER" id="PTHR43396:SF3">
    <property type="entry name" value="FLAVOHEMOPROTEIN"/>
    <property type="match status" value="1"/>
</dbReference>
<dbReference type="Pfam" id="PF00970">
    <property type="entry name" value="FAD_binding_6"/>
    <property type="match status" value="1"/>
</dbReference>
<dbReference type="Pfam" id="PF00042">
    <property type="entry name" value="Globin"/>
    <property type="match status" value="1"/>
</dbReference>
<dbReference type="Pfam" id="PF00175">
    <property type="entry name" value="NAD_binding_1"/>
    <property type="match status" value="1"/>
</dbReference>
<dbReference type="SUPFAM" id="SSF52343">
    <property type="entry name" value="Ferredoxin reductase-like, C-terminal NADP-linked domain"/>
    <property type="match status" value="1"/>
</dbReference>
<dbReference type="SUPFAM" id="SSF46458">
    <property type="entry name" value="Globin-like"/>
    <property type="match status" value="1"/>
</dbReference>
<dbReference type="SUPFAM" id="SSF63380">
    <property type="entry name" value="Riboflavin synthase domain-like"/>
    <property type="match status" value="1"/>
</dbReference>
<dbReference type="PROSITE" id="PS51384">
    <property type="entry name" value="FAD_FR"/>
    <property type="match status" value="1"/>
</dbReference>
<dbReference type="PROSITE" id="PS01033">
    <property type="entry name" value="GLOBIN"/>
    <property type="match status" value="1"/>
</dbReference>
<feature type="chain" id="PRO_0000052458" description="Flavohemoprotein">
    <location>
        <begin position="1"/>
        <end position="399"/>
    </location>
</feature>
<feature type="domain" description="Globin" evidence="2">
    <location>
        <begin position="1"/>
        <end position="138"/>
    </location>
</feature>
<feature type="domain" description="FAD-binding FR-type" evidence="3">
    <location>
        <begin position="147"/>
        <end position="264"/>
    </location>
</feature>
<feature type="region of interest" description="Reductase">
    <location>
        <begin position="146"/>
        <end position="399"/>
    </location>
</feature>
<feature type="active site" description="Charge relay system" evidence="1">
    <location>
        <position position="95"/>
    </location>
</feature>
<feature type="active site" description="Charge relay system" evidence="1">
    <location>
        <position position="137"/>
    </location>
</feature>
<feature type="binding site" description="proximal binding residue" evidence="2">
    <location>
        <position position="85"/>
    </location>
    <ligand>
        <name>heme b</name>
        <dbReference type="ChEBI" id="CHEBI:60344"/>
    </ligand>
    <ligandPart>
        <name>Fe</name>
        <dbReference type="ChEBI" id="CHEBI:18248"/>
    </ligandPart>
</feature>
<feature type="binding site" evidence="1">
    <location>
        <position position="189"/>
    </location>
    <ligand>
        <name>FAD</name>
        <dbReference type="ChEBI" id="CHEBI:57692"/>
    </ligand>
</feature>
<feature type="binding site" evidence="1">
    <location>
        <begin position="207"/>
        <end position="210"/>
    </location>
    <ligand>
        <name>FAD</name>
        <dbReference type="ChEBI" id="CHEBI:57692"/>
    </ligand>
</feature>
<feature type="binding site" evidence="1">
    <location>
        <begin position="281"/>
        <end position="286"/>
    </location>
    <ligand>
        <name>NADP(+)</name>
        <dbReference type="ChEBI" id="CHEBI:58349"/>
    </ligand>
</feature>
<feature type="binding site" evidence="1">
    <location>
        <begin position="389"/>
        <end position="392"/>
    </location>
    <ligand>
        <name>FAD</name>
        <dbReference type="ChEBI" id="CHEBI:57692"/>
    </ligand>
</feature>
<feature type="site" description="Involved in heme-bound ligand stabilization and O-O bond activation" evidence="1">
    <location>
        <position position="29"/>
    </location>
</feature>
<feature type="site" description="Influences the redox potential of the prosthetic heme and FAD groups" evidence="1">
    <location>
        <position position="84"/>
    </location>
</feature>
<feature type="site" description="Influences the redox potential of the prosthetic heme and FAD groups" evidence="1">
    <location>
        <position position="388"/>
    </location>
</feature>
<feature type="modified residue" description="Phosphothreonine" evidence="8">
    <location>
        <position position="22"/>
    </location>
</feature>
<feature type="sequence variant" description="In strain: JM43." evidence="6">
    <original>D</original>
    <variation>E</variation>
    <location>
        <position position="153"/>
    </location>
</feature>
<feature type="sequence variant" description="In strain: JM43." evidence="6">
    <original>N</original>
    <variation>D</variation>
    <location>
        <position position="345"/>
    </location>
</feature>
<feature type="sequence variant" description="In strain: JM43." evidence="6">
    <original>L</original>
    <variation>V</variation>
    <location>
        <position position="365"/>
    </location>
</feature>
<reference key="1">
    <citation type="journal article" date="1992" name="Proc. Natl. Acad. Sci. U.S.A.">
        <title>Yeast flavohemoglobin is an ancient protein related to globins and a reductase family.</title>
        <authorList>
            <person name="Zhu H."/>
            <person name="Riggs A.F."/>
        </authorList>
    </citation>
    <scope>NUCLEOTIDE SEQUENCE [GENOMIC DNA / MRNA]</scope>
    <scope>PROTEIN SEQUENCE OF 1-31</scope>
    <scope>VARIANTS GLU-153; ASP-345 AND VAL-365</scope>
    <source>
        <strain>DBY939</strain>
        <strain>JM43</strain>
    </source>
</reference>
<reference key="2">
    <citation type="journal article" date="1996" name="Yeast">
        <title>Sequence analysis of the 43 kb CRM1-YLM9-PET54-DIE2-SMI1-PHO81-YHB4-PFK1 region from the right arm of Saccharomyces cerevisiae chromosome VII.</title>
        <authorList>
            <person name="van der Aart Q.J.M."/>
            <person name="Kleine K."/>
            <person name="Steensma H.Y."/>
        </authorList>
    </citation>
    <scope>NUCLEOTIDE SEQUENCE [GENOMIC DNA]</scope>
    <source>
        <strain>ATCC 204508 / S288c</strain>
    </source>
</reference>
<reference key="3">
    <citation type="journal article" date="1997" name="Nature">
        <title>The nucleotide sequence of Saccharomyces cerevisiae chromosome VII.</title>
        <authorList>
            <person name="Tettelin H."/>
            <person name="Agostoni-Carbone M.L."/>
            <person name="Albermann K."/>
            <person name="Albers M."/>
            <person name="Arroyo J."/>
            <person name="Backes U."/>
            <person name="Barreiros T."/>
            <person name="Bertani I."/>
            <person name="Bjourson A.J."/>
            <person name="Brueckner M."/>
            <person name="Bruschi C.V."/>
            <person name="Carignani G."/>
            <person name="Castagnoli L."/>
            <person name="Cerdan E."/>
            <person name="Clemente M.L."/>
            <person name="Coblenz A."/>
            <person name="Coglievina M."/>
            <person name="Coissac E."/>
            <person name="Defoor E."/>
            <person name="Del Bino S."/>
            <person name="Delius H."/>
            <person name="Delneri D."/>
            <person name="de Wergifosse P."/>
            <person name="Dujon B."/>
            <person name="Durand P."/>
            <person name="Entian K.-D."/>
            <person name="Eraso P."/>
            <person name="Escribano V."/>
            <person name="Fabiani L."/>
            <person name="Fartmann B."/>
            <person name="Feroli F."/>
            <person name="Feuermann M."/>
            <person name="Frontali L."/>
            <person name="Garcia-Gonzalez M."/>
            <person name="Garcia-Saez M.I."/>
            <person name="Goffeau A."/>
            <person name="Guerreiro P."/>
            <person name="Hani J."/>
            <person name="Hansen M."/>
            <person name="Hebling U."/>
            <person name="Hernandez K."/>
            <person name="Heumann K."/>
            <person name="Hilger F."/>
            <person name="Hofmann B."/>
            <person name="Indge K.J."/>
            <person name="James C.M."/>
            <person name="Klima R."/>
            <person name="Koetter P."/>
            <person name="Kramer B."/>
            <person name="Kramer W."/>
            <person name="Lauquin G."/>
            <person name="Leuther H."/>
            <person name="Louis E.J."/>
            <person name="Maillier E."/>
            <person name="Marconi A."/>
            <person name="Martegani E."/>
            <person name="Mazon M.J."/>
            <person name="Mazzoni C."/>
            <person name="McReynolds A.D.K."/>
            <person name="Melchioretto P."/>
            <person name="Mewes H.-W."/>
            <person name="Minenkova O."/>
            <person name="Mueller-Auer S."/>
            <person name="Nawrocki A."/>
            <person name="Netter P."/>
            <person name="Neu R."/>
            <person name="Nombela C."/>
            <person name="Oliver S.G."/>
            <person name="Panzeri L."/>
            <person name="Paoluzi S."/>
            <person name="Plevani P."/>
            <person name="Portetelle D."/>
            <person name="Portillo F."/>
            <person name="Potier S."/>
            <person name="Purnelle B."/>
            <person name="Rieger M."/>
            <person name="Riles L."/>
            <person name="Rinaldi T."/>
            <person name="Robben J."/>
            <person name="Rodrigues-Pousada C."/>
            <person name="Rodriguez-Belmonte E."/>
            <person name="Rodriguez-Torres A.M."/>
            <person name="Rose M."/>
            <person name="Ruzzi M."/>
            <person name="Saliola M."/>
            <person name="Sanchez-Perez M."/>
            <person name="Schaefer B."/>
            <person name="Schaefer M."/>
            <person name="Scharfe M."/>
            <person name="Schmidheini T."/>
            <person name="Schreer A."/>
            <person name="Skala J."/>
            <person name="Souciet J.-L."/>
            <person name="Steensma H.Y."/>
            <person name="Talla E."/>
            <person name="Thierry A."/>
            <person name="Vandenbol M."/>
            <person name="van der Aart Q.J.M."/>
            <person name="Van Dyck L."/>
            <person name="Vanoni M."/>
            <person name="Verhasselt P."/>
            <person name="Voet M."/>
            <person name="Volckaert G."/>
            <person name="Wambutt R."/>
            <person name="Watson M.D."/>
            <person name="Weber N."/>
            <person name="Wedler E."/>
            <person name="Wedler H."/>
            <person name="Wipfli P."/>
            <person name="Wolf K."/>
            <person name="Wright L.F."/>
            <person name="Zaccaria P."/>
            <person name="Zimmermann M."/>
            <person name="Zollner A."/>
            <person name="Kleine K."/>
        </authorList>
    </citation>
    <scope>NUCLEOTIDE SEQUENCE [LARGE SCALE GENOMIC DNA]</scope>
    <source>
        <strain>ATCC 204508 / S288c</strain>
    </source>
</reference>
<reference key="4">
    <citation type="journal article" date="2014" name="G3 (Bethesda)">
        <title>The reference genome sequence of Saccharomyces cerevisiae: Then and now.</title>
        <authorList>
            <person name="Engel S.R."/>
            <person name="Dietrich F.S."/>
            <person name="Fisk D.G."/>
            <person name="Binkley G."/>
            <person name="Balakrishnan R."/>
            <person name="Costanzo M.C."/>
            <person name="Dwight S.S."/>
            <person name="Hitz B.C."/>
            <person name="Karra K."/>
            <person name="Nash R.S."/>
            <person name="Weng S."/>
            <person name="Wong E.D."/>
            <person name="Lloyd P."/>
            <person name="Skrzypek M.S."/>
            <person name="Miyasato S.R."/>
            <person name="Simison M."/>
            <person name="Cherry J.M."/>
        </authorList>
    </citation>
    <scope>GENOME REANNOTATION</scope>
    <source>
        <strain>ATCC 204508 / S288c</strain>
    </source>
</reference>
<reference key="5">
    <citation type="journal article" date="2007" name="Genome Res.">
        <title>Approaching a complete repository of sequence-verified protein-encoding clones for Saccharomyces cerevisiae.</title>
        <authorList>
            <person name="Hu Y."/>
            <person name="Rolfs A."/>
            <person name="Bhullar B."/>
            <person name="Murthy T.V.S."/>
            <person name="Zhu C."/>
            <person name="Berger M.F."/>
            <person name="Camargo A.A."/>
            <person name="Kelley F."/>
            <person name="McCarron S."/>
            <person name="Jepson D."/>
            <person name="Richardson A."/>
            <person name="Raphael J."/>
            <person name="Moreira D."/>
            <person name="Taycher E."/>
            <person name="Zuo D."/>
            <person name="Mohr S."/>
            <person name="Kane M.F."/>
            <person name="Williamson J."/>
            <person name="Simpson A.J.G."/>
            <person name="Bulyk M.L."/>
            <person name="Harlow E."/>
            <person name="Marsischky G."/>
            <person name="Kolodner R.D."/>
            <person name="LaBaer J."/>
        </authorList>
    </citation>
    <scope>NUCLEOTIDE SEQUENCE [GENOMIC DNA]</scope>
    <source>
        <strain>ATCC 204508 / S288c</strain>
    </source>
</reference>
<reference key="6">
    <citation type="submission" date="2000-02" db="EMBL/GenBank/DDBJ databases">
        <authorList>
            <person name="Perez-Ortin J.E."/>
        </authorList>
    </citation>
    <scope>NUCLEOTIDE SEQUENCE [GENOMIC DNA] OF 1-36</scope>
    <source>
        <strain>T73</strain>
    </source>
</reference>
<reference key="7">
    <citation type="journal article" date="1995" name="J. Biol. Chem.">
        <title>Regulation of Saccharomyces cerevisiae flavohemoglobin gene expression.</title>
        <authorList>
            <person name="Crawford M.J."/>
            <person name="Sherman D.R."/>
            <person name="Goldberg D.E."/>
        </authorList>
    </citation>
    <scope>REGULATION OF EXPRESSION</scope>
</reference>
<reference key="8">
    <citation type="journal article" date="1996" name="J. Biol. Chem.">
        <title>Function and expression of flavohemoglobin in Saccharomyces cerevisiae. Evidence for a role in the oxidative stress response.</title>
        <authorList>
            <person name="Buisson N."/>
            <person name="Labbe-Bois R."/>
        </authorList>
    </citation>
    <scope>ROLE IN OXIDATIVE STRESS</scope>
</reference>
<reference key="9">
    <citation type="journal article" date="1998" name="J. Biol. Chem.">
        <title>Flavohemoglobin expression and function in Saccharomyces cerevisiae. No relationship with respiration and complex response to oxidative stress.</title>
        <authorList>
            <person name="Buisson N."/>
            <person name="Labbe-Bois R."/>
        </authorList>
    </citation>
    <scope>ROLE IN OXIDATIVE STRESS</scope>
</reference>
<reference key="10">
    <citation type="journal article" date="2000" name="J. Biol. Chem.">
        <title>Nitric-oxide dioxygenase activity and function of flavohemoglobins. Sensitivity to nitric oxide and carbon monoxide inhibition.</title>
        <authorList>
            <person name="Gardner P.R."/>
            <person name="Gardner A.M."/>
            <person name="Martin L.A."/>
            <person name="Dou Y."/>
            <person name="Li T."/>
            <person name="Olson J.S."/>
            <person name="Zhu H."/>
            <person name="Riggs A.F."/>
        </authorList>
    </citation>
    <scope>ENZYME ACTIVITY</scope>
</reference>
<reference key="11">
    <citation type="journal article" date="2000" name="Proc. Natl. Acad. Sci. U.S.A.">
        <title>Protection from nitrosative stress by yeast flavohemoglobin.</title>
        <authorList>
            <person name="Liu L."/>
            <person name="Zeng M."/>
            <person name="Hausladen A."/>
            <person name="Heitman J."/>
            <person name="Stamler J.S."/>
        </authorList>
    </citation>
    <scope>ROLE IN NITRIC OXIDE DETOXIFICATION</scope>
</reference>
<reference key="12">
    <citation type="journal article" date="2003" name="Nature">
        <title>Global analysis of protein expression in yeast.</title>
        <authorList>
            <person name="Ghaemmaghami S."/>
            <person name="Huh W.-K."/>
            <person name="Bower K."/>
            <person name="Howson R.W."/>
            <person name="Belle A."/>
            <person name="Dephoure N."/>
            <person name="O'Shea E.K."/>
            <person name="Weissman J.S."/>
        </authorList>
    </citation>
    <scope>LEVEL OF PROTEIN EXPRESSION [LARGE SCALE ANALYSIS]</scope>
</reference>
<reference key="13">
    <citation type="journal article" date="2008" name="Mol. Cell. Proteomics">
        <title>A multidimensional chromatography technology for in-depth phosphoproteome analysis.</title>
        <authorList>
            <person name="Albuquerque C.P."/>
            <person name="Smolka M.B."/>
            <person name="Payne S.H."/>
            <person name="Bafna V."/>
            <person name="Eng J."/>
            <person name="Zhou H."/>
        </authorList>
    </citation>
    <scope>PHOSPHORYLATION [LARGE SCALE ANALYSIS] AT THR-22</scope>
    <scope>IDENTIFICATION BY MASS SPECTROMETRY [LARGE SCALE ANALYSIS]</scope>
</reference>
<reference key="14">
    <citation type="journal article" date="2012" name="Proc. Natl. Acad. Sci. U.S.A.">
        <title>N-terminal acetylome analyses and functional insights of the N-terminal acetyltransferase NatB.</title>
        <authorList>
            <person name="Van Damme P."/>
            <person name="Lasa M."/>
            <person name="Polevoda B."/>
            <person name="Gazquez C."/>
            <person name="Elosegui-Artola A."/>
            <person name="Kim D.S."/>
            <person name="De Juan-Pardo E."/>
            <person name="Demeyer K."/>
            <person name="Hole K."/>
            <person name="Larrea E."/>
            <person name="Timmerman E."/>
            <person name="Prieto J."/>
            <person name="Arnesen T."/>
            <person name="Sherman F."/>
            <person name="Gevaert K."/>
            <person name="Aldabe R."/>
        </authorList>
    </citation>
    <scope>IDENTIFICATION BY MASS SPECTROMETRY [LARGE SCALE ANALYSIS]</scope>
</reference>
<accession>P39676</accession>
<accession>D6VV14</accession>
<accession>Q6B1W6</accession>
<accession>Q9C1R6</accession>
<keyword id="KW-0963">Cytoplasm</keyword>
<keyword id="KW-0216">Detoxification</keyword>
<keyword id="KW-0903">Direct protein sequencing</keyword>
<keyword id="KW-0274">FAD</keyword>
<keyword id="KW-0285">Flavoprotein</keyword>
<keyword id="KW-0349">Heme</keyword>
<keyword id="KW-0408">Iron</keyword>
<keyword id="KW-0479">Metal-binding</keyword>
<keyword id="KW-0520">NAD</keyword>
<keyword id="KW-0521">NADP</keyword>
<keyword id="KW-0560">Oxidoreductase</keyword>
<keyword id="KW-0597">Phosphoprotein</keyword>
<keyword id="KW-1185">Reference proteome</keyword>